<sequence length="231" mass="26605">MKVVIVTSVRSLLDASIQFQKTACRHHCNYLSMQVVKEIEEFGTINEKNLEFDTWKDVIQNDEIDALVFYRVKQISISTGVLYESMMRNRTKPISMYFVRDCLAFDGNPPSFRMTSCNINAYNRSKIKDLIILMNMKTCNKKIIGEFIIDNFGSVDALLSIVNSNVTWVTSVINNSNGRGINIRVSNNKMLTITSFRRFVNKLKMYKTTKCASQLDNLCTEMNKMDIIDKK</sequence>
<feature type="chain" id="PRO_0000099515" description="Protein OPG061">
    <location>
        <begin position="1"/>
        <end position="231"/>
    </location>
</feature>
<organismHost>
    <name type="scientific">Homo sapiens</name>
    <name type="common">Human</name>
    <dbReference type="NCBI Taxonomy" id="9606"/>
</organismHost>
<accession>P21021</accession>
<evidence type="ECO:0000250" key="1">
    <source>
        <dbReference type="UniProtKB" id="Q80HX3"/>
    </source>
</evidence>
<evidence type="ECO:0000305" key="2"/>
<gene>
    <name type="primary">OPG061</name>
    <name type="ORF">F16L</name>
</gene>
<name>PG061_VACCC</name>
<proteinExistence type="inferred from homology"/>
<comment type="subcellular location">
    <subcellularLocation>
        <location evidence="1">Host nucleus</location>
        <location evidence="1">Host nucleolus</location>
    </subcellularLocation>
</comment>
<comment type="induction">
    <text evidence="1">Expressed in the early phase of the viral replicative cycle.</text>
</comment>
<comment type="similarity">
    <text evidence="2">Belongs to the orthopoxvirus OPG058 family.</text>
</comment>
<protein>
    <recommendedName>
        <fullName>Protein OPG061</fullName>
    </recommendedName>
    <alternativeName>
        <fullName>Protein F16</fullName>
    </alternativeName>
</protein>
<reference key="1">
    <citation type="journal article" date="1990" name="Virology">
        <title>The complete DNA sequence of vaccinia virus.</title>
        <authorList>
            <person name="Goebel S.J."/>
            <person name="Johnson G.P."/>
            <person name="Perkus M.E."/>
            <person name="Davis S.W."/>
            <person name="Winslow J.P."/>
            <person name="Paoletti E."/>
        </authorList>
    </citation>
    <scope>NUCLEOTIDE SEQUENCE [LARGE SCALE GENOMIC DNA]</scope>
</reference>
<reference key="2">
    <citation type="journal article" date="1990" name="Virology">
        <title>Appendix to 'The complete DNA sequence of vaccinia virus'.</title>
        <authorList>
            <person name="Goebel S.J."/>
            <person name="Johnson G.P."/>
            <person name="Perkus M.E."/>
            <person name="Davis S.W."/>
            <person name="Winslow J.P."/>
            <person name="Paoletti E."/>
        </authorList>
    </citation>
    <scope>NUCLEOTIDE SEQUENCE [LARGE SCALE GENOMIC DNA]</scope>
</reference>
<dbReference type="EMBL" id="M35027">
    <property type="protein sequence ID" value="AAA48035.1"/>
    <property type="molecule type" value="Genomic_DNA"/>
</dbReference>
<dbReference type="PIR" id="C42508">
    <property type="entry name" value="C42508"/>
</dbReference>
<dbReference type="SMR" id="P21021"/>
<dbReference type="Proteomes" id="UP000008269">
    <property type="component" value="Segment"/>
</dbReference>
<dbReference type="GO" id="GO:0044196">
    <property type="term" value="C:host cell nucleolus"/>
    <property type="evidence" value="ECO:0007669"/>
    <property type="project" value="UniProtKB-SubCell"/>
</dbReference>
<dbReference type="InterPro" id="IPR006798">
    <property type="entry name" value="Poxvirus_F16"/>
</dbReference>
<dbReference type="Pfam" id="PF04708">
    <property type="entry name" value="Pox_F16"/>
    <property type="match status" value="1"/>
</dbReference>
<dbReference type="PIRSF" id="PIRSF015792">
    <property type="entry name" value="VAC_F16L"/>
    <property type="match status" value="1"/>
</dbReference>
<keyword id="KW-0244">Early protein</keyword>
<keyword id="KW-1048">Host nucleus</keyword>
<keyword id="KW-1185">Reference proteome</keyword>
<organism>
    <name type="scientific">Vaccinia virus (strain Copenhagen)</name>
    <name type="common">VACV</name>
    <dbReference type="NCBI Taxonomy" id="10249"/>
    <lineage>
        <taxon>Viruses</taxon>
        <taxon>Varidnaviria</taxon>
        <taxon>Bamfordvirae</taxon>
        <taxon>Nucleocytoviricota</taxon>
        <taxon>Pokkesviricetes</taxon>
        <taxon>Chitovirales</taxon>
        <taxon>Poxviridae</taxon>
        <taxon>Chordopoxvirinae</taxon>
        <taxon>Orthopoxvirus</taxon>
        <taxon>Vaccinia virus</taxon>
    </lineage>
</organism>